<protein>
    <recommendedName>
        <fullName>Gag polyprotein</fullName>
    </recommendedName>
    <alternativeName>
        <fullName>Pr55Gag</fullName>
    </alternativeName>
    <component>
        <recommendedName>
            <fullName>Matrix protein p17</fullName>
            <shortName>MA</shortName>
        </recommendedName>
    </component>
    <component>
        <recommendedName>
            <fullName>Capsid protein p24</fullName>
            <shortName>CA</shortName>
        </recommendedName>
    </component>
    <component>
        <recommendedName>
            <fullName evidence="6">Spacer peptide 1</fullName>
            <shortName>SP1</shortName>
        </recommendedName>
        <alternativeName>
            <fullName>p2</fullName>
        </alternativeName>
    </component>
    <component>
        <recommendedName>
            <fullName>Nucleocapsid protein p7</fullName>
            <shortName>NC</shortName>
        </recommendedName>
    </component>
    <component>
        <recommendedName>
            <fullName evidence="6">Spacer peptide 2</fullName>
            <shortName>SP2</shortName>
        </recommendedName>
        <alternativeName>
            <fullName>p1</fullName>
        </alternativeName>
    </component>
    <component>
        <recommendedName>
            <fullName>p6-gag</fullName>
        </recommendedName>
    </component>
</protein>
<organismHost>
    <name type="scientific">Homo sapiens</name>
    <name type="common">Human</name>
    <dbReference type="NCBI Taxonomy" id="9606"/>
</organismHost>
<name>GAG_HV2G1</name>
<gene>
    <name type="primary">gag</name>
</gene>
<reference key="1">
    <citation type="journal article" date="1989" name="AIDS Res. Hum. Retroviruses">
        <title>Genomic divergence of HIV-2 from Ghana.</title>
        <authorList>
            <person name="Hasegawa A."/>
            <person name="Tsujimoto H."/>
            <person name="Maki N."/>
            <person name="Ishikawa K."/>
            <person name="Miura T."/>
            <person name="Fukasawa M."/>
            <person name="Miki K."/>
            <person name="Hayami M."/>
        </authorList>
    </citation>
    <scope>NUCLEOTIDE SEQUENCE [GENOMIC DNA]</scope>
</reference>
<dbReference type="EMBL" id="M30895">
    <property type="protein sequence ID" value="AAA43932.1"/>
    <property type="molecule type" value="Genomic_DNA"/>
</dbReference>
<dbReference type="PIR" id="JS0327">
    <property type="entry name" value="FOLJGG"/>
</dbReference>
<dbReference type="PDB" id="1NC8">
    <property type="method" value="NMR"/>
    <property type="chains" value="A=384-412"/>
</dbReference>
<dbReference type="PDB" id="2DI2">
    <property type="method" value="NMR"/>
    <property type="chains" value="A=384-412"/>
</dbReference>
<dbReference type="PDB" id="2EC7">
    <property type="method" value="NMR"/>
    <property type="chains" value="A=384-432"/>
</dbReference>
<dbReference type="PDBsum" id="1NC8"/>
<dbReference type="PDBsum" id="2DI2"/>
<dbReference type="PDBsum" id="2EC7"/>
<dbReference type="BMRB" id="P18041"/>
<dbReference type="SMR" id="P18041"/>
<dbReference type="EvolutionaryTrace" id="P18041"/>
<dbReference type="PRO" id="PR:P18041"/>
<dbReference type="Proteomes" id="UP000007424">
    <property type="component" value="Segment"/>
</dbReference>
<dbReference type="GO" id="GO:0042025">
    <property type="term" value="C:host cell nucleus"/>
    <property type="evidence" value="ECO:0007669"/>
    <property type="project" value="UniProtKB-SubCell"/>
</dbReference>
<dbReference type="GO" id="GO:0020002">
    <property type="term" value="C:host cell plasma membrane"/>
    <property type="evidence" value="ECO:0007669"/>
    <property type="project" value="UniProtKB-SubCell"/>
</dbReference>
<dbReference type="GO" id="GO:0072494">
    <property type="term" value="C:host multivesicular body"/>
    <property type="evidence" value="ECO:0007669"/>
    <property type="project" value="UniProtKB-SubCell"/>
</dbReference>
<dbReference type="GO" id="GO:0016020">
    <property type="term" value="C:membrane"/>
    <property type="evidence" value="ECO:0007669"/>
    <property type="project" value="UniProtKB-KW"/>
</dbReference>
<dbReference type="GO" id="GO:0019013">
    <property type="term" value="C:viral nucleocapsid"/>
    <property type="evidence" value="ECO:0007669"/>
    <property type="project" value="UniProtKB-KW"/>
</dbReference>
<dbReference type="GO" id="GO:0055036">
    <property type="term" value="C:virion membrane"/>
    <property type="evidence" value="ECO:0007669"/>
    <property type="project" value="UniProtKB-SubCell"/>
</dbReference>
<dbReference type="GO" id="GO:0003723">
    <property type="term" value="F:RNA binding"/>
    <property type="evidence" value="ECO:0007669"/>
    <property type="project" value="UniProtKB-KW"/>
</dbReference>
<dbReference type="GO" id="GO:0005198">
    <property type="term" value="F:structural molecule activity"/>
    <property type="evidence" value="ECO:0007669"/>
    <property type="project" value="InterPro"/>
</dbReference>
<dbReference type="GO" id="GO:0008270">
    <property type="term" value="F:zinc ion binding"/>
    <property type="evidence" value="ECO:0007669"/>
    <property type="project" value="UniProtKB-KW"/>
</dbReference>
<dbReference type="GO" id="GO:0039702">
    <property type="term" value="P:viral budding via host ESCRT complex"/>
    <property type="evidence" value="ECO:0007669"/>
    <property type="project" value="UniProtKB-KW"/>
</dbReference>
<dbReference type="GO" id="GO:0075523">
    <property type="term" value="P:viral translational frameshifting"/>
    <property type="evidence" value="ECO:0007669"/>
    <property type="project" value="UniProtKB-KW"/>
</dbReference>
<dbReference type="Gene3D" id="1.10.1200.30">
    <property type="match status" value="1"/>
</dbReference>
<dbReference type="Gene3D" id="1.10.375.10">
    <property type="entry name" value="Human Immunodeficiency Virus Type 1 Capsid Protein"/>
    <property type="match status" value="1"/>
</dbReference>
<dbReference type="Gene3D" id="1.10.150.90">
    <property type="entry name" value="Immunodeficiency lentiviruses, gag gene matrix protein p17"/>
    <property type="match status" value="1"/>
</dbReference>
<dbReference type="Gene3D" id="1.20.5.760">
    <property type="entry name" value="Single helix bin"/>
    <property type="match status" value="1"/>
</dbReference>
<dbReference type="Gene3D" id="4.10.60.10">
    <property type="entry name" value="Zinc finger, CCHC-type"/>
    <property type="match status" value="1"/>
</dbReference>
<dbReference type="InterPro" id="IPR045345">
    <property type="entry name" value="Gag_p24_C"/>
</dbReference>
<dbReference type="InterPro" id="IPR000071">
    <property type="entry name" value="Lentvrl_matrix_N"/>
</dbReference>
<dbReference type="InterPro" id="IPR012344">
    <property type="entry name" value="Matrix_HIV/RSV_N"/>
</dbReference>
<dbReference type="InterPro" id="IPR050195">
    <property type="entry name" value="Primate_lentivir_Gag_pol-like"/>
</dbReference>
<dbReference type="InterPro" id="IPR008916">
    <property type="entry name" value="Retrov_capsid_C"/>
</dbReference>
<dbReference type="InterPro" id="IPR008919">
    <property type="entry name" value="Retrov_capsid_N"/>
</dbReference>
<dbReference type="InterPro" id="IPR010999">
    <property type="entry name" value="Retrovr_matrix"/>
</dbReference>
<dbReference type="InterPro" id="IPR001878">
    <property type="entry name" value="Znf_CCHC"/>
</dbReference>
<dbReference type="InterPro" id="IPR036875">
    <property type="entry name" value="Znf_CCHC_sf"/>
</dbReference>
<dbReference type="PANTHER" id="PTHR40389:SF4">
    <property type="match status" value="1"/>
</dbReference>
<dbReference type="PANTHER" id="PTHR40389">
    <property type="entry name" value="ENDOGENOUS RETROVIRUS GROUP K MEMBER 24 GAG POLYPROTEIN-RELATED"/>
    <property type="match status" value="1"/>
</dbReference>
<dbReference type="Pfam" id="PF00540">
    <property type="entry name" value="Gag_p17"/>
    <property type="match status" value="1"/>
</dbReference>
<dbReference type="Pfam" id="PF00607">
    <property type="entry name" value="Gag_p24"/>
    <property type="match status" value="1"/>
</dbReference>
<dbReference type="Pfam" id="PF19317">
    <property type="entry name" value="Gag_p24_C"/>
    <property type="match status" value="1"/>
</dbReference>
<dbReference type="Pfam" id="PF00098">
    <property type="entry name" value="zf-CCHC"/>
    <property type="match status" value="2"/>
</dbReference>
<dbReference type="PRINTS" id="PR00234">
    <property type="entry name" value="HIV1MATRIX"/>
</dbReference>
<dbReference type="SMART" id="SM00343">
    <property type="entry name" value="ZnF_C2HC"/>
    <property type="match status" value="2"/>
</dbReference>
<dbReference type="SUPFAM" id="SSF47836">
    <property type="entry name" value="Retroviral matrix proteins"/>
    <property type="match status" value="1"/>
</dbReference>
<dbReference type="SUPFAM" id="SSF47353">
    <property type="entry name" value="Retrovirus capsid dimerization domain-like"/>
    <property type="match status" value="1"/>
</dbReference>
<dbReference type="SUPFAM" id="SSF47943">
    <property type="entry name" value="Retrovirus capsid protein, N-terminal core domain"/>
    <property type="match status" value="1"/>
</dbReference>
<dbReference type="SUPFAM" id="SSF57756">
    <property type="entry name" value="Retrovirus zinc finger-like domains"/>
    <property type="match status" value="1"/>
</dbReference>
<dbReference type="PROSITE" id="PS50158">
    <property type="entry name" value="ZF_CCHC"/>
    <property type="match status" value="2"/>
</dbReference>
<organism>
    <name type="scientific">Human immunodeficiency virus type 2 subtype A (isolate Ghana-1)</name>
    <name type="common">HIV-2</name>
    <dbReference type="NCBI Taxonomy" id="11717"/>
    <lineage>
        <taxon>Viruses</taxon>
        <taxon>Riboviria</taxon>
        <taxon>Pararnavirae</taxon>
        <taxon>Artverviricota</taxon>
        <taxon>Revtraviricetes</taxon>
        <taxon>Ortervirales</taxon>
        <taxon>Retroviridae</taxon>
        <taxon>Orthoretrovirinae</taxon>
        <taxon>Lentivirus</taxon>
        <taxon>Human immunodeficiency virus 2</taxon>
    </lineage>
</organism>
<proteinExistence type="evidence at protein level"/>
<feature type="initiator methionine" description="Removed; by host" evidence="1">
    <location>
        <position position="1"/>
    </location>
</feature>
<feature type="chain" id="PRO_0000261245" description="Gag polyprotein">
    <location>
        <begin position="2"/>
        <end position="522"/>
    </location>
</feature>
<feature type="chain" id="PRO_0000038607" description="Matrix protein p17" evidence="1">
    <location>
        <begin position="2"/>
        <end position="135"/>
    </location>
</feature>
<feature type="chain" id="PRO_0000038608" description="Capsid protein p24" evidence="1">
    <location>
        <begin position="136"/>
        <end position="366"/>
    </location>
</feature>
<feature type="peptide" id="PRO_0000042075" description="Spacer peptide 1" evidence="1">
    <location>
        <begin position="367"/>
        <end position="383"/>
    </location>
</feature>
<feature type="chain" id="PRO_0000042076" description="Nucleocapsid protein p7" evidence="1">
    <location>
        <begin position="384"/>
        <end position="432"/>
    </location>
</feature>
<feature type="peptide" id="PRO_0000042077" description="Spacer peptide 2" evidence="1">
    <location>
        <begin position="433"/>
        <end position="446"/>
    </location>
</feature>
<feature type="chain" id="PRO_0000042078" description="p6-gag" evidence="1">
    <location>
        <begin position="447"/>
        <end position="522"/>
    </location>
</feature>
<feature type="zinc finger region" description="CCHC-type 1" evidence="9">
    <location>
        <begin position="390"/>
        <end position="407"/>
    </location>
</feature>
<feature type="zinc finger region" description="CCHC-type 2" evidence="9">
    <location>
        <begin position="411"/>
        <end position="428"/>
    </location>
</feature>
<feature type="region of interest" description="Interaction with Gp41" evidence="6">
    <location>
        <begin position="7"/>
        <end position="31"/>
    </location>
</feature>
<feature type="region of interest" description="Interaction with host CALM1" evidence="5">
    <location>
        <begin position="8"/>
        <end position="43"/>
    </location>
</feature>
<feature type="region of interest" description="Interaction with host AP3D1" evidence="7">
    <location>
        <begin position="12"/>
        <end position="19"/>
    </location>
</feature>
<feature type="region of interest" description="Interaction with membrane phosphatidylinositol 4,5-bisphosphate and RNA" evidence="6">
    <location>
        <begin position="14"/>
        <end position="33"/>
    </location>
</feature>
<feature type="region of interest" description="Interaction with membrane phosphatidylinositol 4,5-bisphosphate" evidence="6">
    <location>
        <begin position="73"/>
        <end position="77"/>
    </location>
</feature>
<feature type="region of interest" description="Disordered" evidence="10">
    <location>
        <begin position="108"/>
        <end position="146"/>
    </location>
</feature>
<feature type="region of interest" description="Interaction with host PPIA/CYPA and NUP153" evidence="6">
    <location>
        <begin position="192"/>
        <end position="229"/>
    </location>
</feature>
<feature type="region of interest" description="PPIA/CYPA-binding loop" evidence="5">
    <location>
        <begin position="220"/>
        <end position="227"/>
    </location>
</feature>
<feature type="region of interest" description="Dimerization/Multimerization of capsid protein p24" evidence="5">
    <location>
        <begin position="280"/>
        <end position="366"/>
    </location>
</feature>
<feature type="short sequence motif" description="Nuclear export signal" evidence="1">
    <location>
        <begin position="16"/>
        <end position="22"/>
    </location>
</feature>
<feature type="short sequence motif" description="Nuclear localization signal" evidence="1">
    <location>
        <begin position="26"/>
        <end position="32"/>
    </location>
</feature>
<feature type="short sequence motif" description="PTAP/PSAP motif">
    <location>
        <begin position="457"/>
        <end position="460"/>
    </location>
</feature>
<feature type="site" description="Cleavage; by viral protease" evidence="1">
    <location>
        <begin position="135"/>
        <end position="136"/>
    </location>
</feature>
<feature type="site" description="Cleavage; by viral protease" evidence="1">
    <location>
        <begin position="366"/>
        <end position="367"/>
    </location>
</feature>
<feature type="site" description="Cleavage; by viral protease" evidence="1">
    <location>
        <begin position="383"/>
        <end position="384"/>
    </location>
</feature>
<feature type="site" description="Cleavage; by viral protease" evidence="1">
    <location>
        <begin position="432"/>
        <end position="433"/>
    </location>
</feature>
<feature type="site" description="Cleavage; by viral protease" evidence="1">
    <location>
        <begin position="446"/>
        <end position="447"/>
    </location>
</feature>
<feature type="modified residue" description="Phosphoserine; by host MAPK1" evidence="6">
    <location>
        <position position="151"/>
    </location>
</feature>
<feature type="lipid moiety-binding region" description="N-myristoyl glycine; by host" evidence="1">
    <location>
        <position position="2"/>
    </location>
</feature>
<feature type="strand" evidence="12">
    <location>
        <begin position="386"/>
        <end position="388"/>
    </location>
</feature>
<feature type="turn" evidence="12">
    <location>
        <begin position="392"/>
        <end position="395"/>
    </location>
</feature>
<feature type="helix" evidence="12">
    <location>
        <begin position="402"/>
        <end position="404"/>
    </location>
</feature>
<feature type="strand" evidence="13">
    <location>
        <begin position="414"/>
        <end position="416"/>
    </location>
</feature>
<feature type="helix" evidence="13">
    <location>
        <begin position="423"/>
        <end position="425"/>
    </location>
</feature>
<comment type="function">
    <molecule>Gag polyprotein</molecule>
    <text evidence="5">Mediates, with Gag-Pol polyprotein, the essential events in virion assembly, including binding the plasma membrane, making the protein-protein interactions necessary to create spherical particles, recruiting the viral Env proteins, and packaging the genomic RNA via direct interactions with the RNA packaging sequence (Psi).</text>
</comment>
<comment type="function">
    <molecule>Matrix protein p17</molecule>
    <text evidence="1 6">Targets the polyprotein to the plasma membrane via a multipartite membrane-binding signal, that includes its myristoylated N-terminus (By similarity). Matrix protein is part of the pre-integration complex. Implicated in the release from host cell mediated by Vpu. Binds to RNA (By similarity).</text>
</comment>
<comment type="function">
    <molecule>Capsid protein p24</molecule>
    <text evidence="5 6 8">Forms the conical core that encapsulates the genomic RNA-nucleocapsid complex in the virion (By similarity). Most core are conical, with only 7% tubular (By similarity). The core is constituted by capsid protein hexamer subunits (By similarity). The core is disassembled soon after virion entry (By similarity). Host restriction factors such as TRIM5-alpha or TRIMCyp bind retroviral capsids and cause premature capsid disassembly, leading to blocks in reverse transcription (By similarity). Capsid restriction by TRIM5 is one of the factors which restricts HIV-1 to the human species (By similarity). Host PIN1 apparently facilitates the virion uncoating (By similarity). On the other hand, interactions with PDZD8 or CYPA stabilize the capsid (By similarity). The capsid interacts with high affinity with human NONO, promoting detection of viral DNA by CGAS, leading to CGAS-mediated inmmune activation (By similarity).</text>
</comment>
<comment type="function">
    <molecule>Nucleocapsid protein p7</molecule>
    <text evidence="5">Encapsulates and protects viral dimeric unspliced genomic RNA (gRNA). Binds these RNAs through its zinc fingers. Acts as a nucleic acid chaperone which is involved in rearangement of nucleic acid secondary structure during gRNA retrotranscription. Also facilitates template switch leading to recombination. As part of the polyprotein, participates in gRNA dimerization, packaging, tRNA incorporation and virion assembly.</text>
</comment>
<comment type="function">
    <molecule>p6-gag</molecule>
    <text evidence="6">Plays a role in budding of the assembled particle by interacting with the host class E VPS proteins TSG101 and PDCD6IP/AIP1.</text>
</comment>
<comment type="subunit">
    <molecule>Gag polyprotein</molecule>
    <text evidence="4 5">Homotrimer; further assembles as hexamers of trimers. Oligomerization possibly creates a central hole into which the cytoplasmic tail of the gp41 envelope protein may be inserted. Interacts with host TRIM22; this interaction seems to disrupt proper trafficking of Gag polyprotein and may interfere with budding. Interacts with host PDZD8. When ubiquitinated, interacts (via p6-gag domain) with host PACSIN2; this interaction allows PACSIN2 recruitment to viral assembly sites and its subsequent incorporation into virions (By similarity).</text>
</comment>
<comment type="subunit">
    <molecule>Matrix protein p17</molecule>
    <text evidence="5 6">Homotrimer; further assembles as hexamers of trimers. Interacts with gp41 (via C-terminus). Interacts with host CALM1; this interaction induces a conformational change in the Matrix protein, triggering exposure of the myristate group. Interacts with host AP3D1; this interaction allows the polyprotein trafficking to multivesicular bodies during virus assembly. Part of the pre-integration complex (PIC) which is composed of viral genome, matrix protein, Vpr and integrase.</text>
</comment>
<comment type="subunit">
    <molecule>Capsid protein p24</molecule>
    <text evidence="5 6 8">Homodimer; the homodimer further multimerizes as homohexamers or homopentamers (By similarity). Interacts with host NUP98 (By similarity). Interacts with host PPIA/CYPA; this interaction stabilizes the capsid (By similarity). Interacts with host NUP153 (By similarity). Interacts with host PDZD8; this interaction stabilizes the capsid. Interacts with host TRIM5; this interaction destabilizes the capsid (By similarity). Interacts with host CPSF6 (By similarity). Interacts with host NONO; the interaction is the interaction is strong and promotes CGAS-mediated immunity (By similarity).</text>
</comment>
<comment type="subunit">
    <molecule>Nucleocapsid protein p7</molecule>
    <text evidence="6">Interacts with host NUP98.</text>
</comment>
<comment type="subunit">
    <molecule>p6-gag</molecule>
    <text evidence="3 6">Interacts with Vpr; this interaction allows Vpr incorporation into the virion. Interacts with host TSG101. p6-gag interacts with host PDCD6IP/AIP1.</text>
</comment>
<comment type="subcellular location">
    <molecule>Gag polyprotein</molecule>
    <subcellularLocation>
        <location evidence="6">Host cell membrane</location>
        <topology evidence="6">Lipid-anchor</topology>
    </subcellularLocation>
    <subcellularLocation>
        <location evidence="6">Host endosome</location>
        <location evidence="6">Host multivesicular body</location>
    </subcellularLocation>
    <text evidence="6">These locations are probably linked to virus assembly sites. The main location is the cell membrane, but under some circumstances, late endosomal compartments can serve as productive sites for virion assembly.</text>
</comment>
<comment type="subcellular location">
    <molecule>Matrix protein p17</molecule>
    <subcellularLocation>
        <location evidence="6">Virion membrane</location>
        <topology evidence="6">Lipid-anchor</topology>
    </subcellularLocation>
    <subcellularLocation>
        <location evidence="1">Host nucleus</location>
    </subcellularLocation>
    <subcellularLocation>
        <location evidence="1">Host cytoplasm</location>
    </subcellularLocation>
</comment>
<comment type="subcellular location">
    <molecule>Capsid protein p24</molecule>
    <subcellularLocation>
        <location evidence="6">Virion</location>
    </subcellularLocation>
</comment>
<comment type="subcellular location">
    <molecule>Nucleocapsid protein p7</molecule>
    <subcellularLocation>
        <location evidence="6">Virion</location>
    </subcellularLocation>
</comment>
<comment type="alternative products">
    <event type="ribosomal frameshifting"/>
    <isoform>
        <id>P18041-1</id>
        <name>Gag polyprotein</name>
        <sequence type="displayed"/>
    </isoform>
    <isoform>
        <id>P18042-1</id>
        <name>Gag-Pol polyprotein</name>
        <sequence type="external"/>
    </isoform>
    <text>Translation results in the formation of the Gag polyprotein most of the time. Ribosomal frameshifting at the gag-pol genes boundary occurs at low frequency and produces the Gag-Pol polyprotein. This strategy of translation probably allows the virus to modulate the quantity of each viral protein. Maintenance of a correct Gag to Gag-Pol ratio is essential for RNA dimerization and viral infectivity.</text>
</comment>
<comment type="domain">
    <text evidence="1">Late-budding domains (L domains) are short sequence motifs essential for viral particle budding. They recruit proteins of the host ESCRT machinery (Endosomal Sorting Complex Required for Transport) or ESCRT-associated proteins. p6-gag contains one L domains: a PTAP/PSAP motif, which interacts with the UEV domain of TSG101 (By similarity).</text>
</comment>
<comment type="PTM">
    <text evidence="6">Gag-Pol polyprotein: Specific enzymatic cleavages by the viral protease yield mature proteins.</text>
</comment>
<comment type="PTM">
    <molecule>Matrix protein p17</molecule>
    <text evidence="5">Tyrosine phosphorylated presumably in the virion by a host kinase. Phosphorylation is apparently not a major regulator of membrane association.</text>
</comment>
<comment type="PTM">
    <text evidence="6">Capsid protein p24 is phosphorylated possibly by host MAPK1; this phosphorylation is necessary for Pin1-mediated virion uncoating.</text>
</comment>
<comment type="PTM">
    <text evidence="2">Nucleocapsid protein p7 is methylated by host PRMT6, impairing its function by reducing RNA annealing and the initiation of reverse transcription.</text>
</comment>
<comment type="miscellaneous">
    <molecule>Isoform Gag polyprotein</molecule>
    <text>Produced by conventional translation.</text>
</comment>
<comment type="similarity">
    <text evidence="11">Belongs to the primate lentivirus group gag polyprotein family.</text>
</comment>
<sequence length="522" mass="58206">MGARNSVLRGKKADELEKIRLRPSGKKKYRLKHIVWAANELDKFGLAESLLESKEGCQKILTVLDPLVPTGSENLKSLFNTVCVIWCLHAEEKVKDTEEAKKLVQRHLGAETGTAEKMPSTSRPTAPPSGRGRNFPVQQTGGGNYIHVPLSPRTLNAWVKLVEDKKFGAEVVPGFQALSEGCTPYDINQMLNCVGDHQAAMQIIREIINDEAADWDAQHPIPGPLPAGQLRDPRGSDIAGTTSTVEEQIQWMYRPQNPVPVGNIYRRWIQIGLQKCVRMYNPTNILDVKQGPKEPFQSYVDRFYKSLRAEQTDPAVKNWMTQTLLIQNANPDCKLVLKGLGMNPTLEEMLTACQGVGGPGQKARLMAEALKEALTPPPIPFAAAQQRKVIRCWNCGKEGHSARQCRAPRRQGCWKCGKTGHVMAKCPERQAGFLGMGPWGKKPRNFPVAQAPPGLIPTAPPADPAVDLLERYMQQGREQREQRERPYKEVTEDLLHLEQGKAPHREATEDLLHLNSLFGKDQ</sequence>
<evidence type="ECO:0000250" key="1"/>
<evidence type="ECO:0000250" key="2">
    <source>
        <dbReference type="UniProtKB" id="P03347"/>
    </source>
</evidence>
<evidence type="ECO:0000250" key="3">
    <source>
        <dbReference type="UniProtKB" id="P03348"/>
    </source>
</evidence>
<evidence type="ECO:0000250" key="4">
    <source>
        <dbReference type="UniProtKB" id="P03349"/>
    </source>
</evidence>
<evidence type="ECO:0000250" key="5">
    <source>
        <dbReference type="UniProtKB" id="P04591"/>
    </source>
</evidence>
<evidence type="ECO:0000250" key="6">
    <source>
        <dbReference type="UniProtKB" id="P12493"/>
    </source>
</evidence>
<evidence type="ECO:0000250" key="7">
    <source>
        <dbReference type="UniProtKB" id="P12497"/>
    </source>
</evidence>
<evidence type="ECO:0000250" key="8">
    <source>
        <dbReference type="UniProtKB" id="P18095"/>
    </source>
</evidence>
<evidence type="ECO:0000255" key="9">
    <source>
        <dbReference type="PROSITE-ProRule" id="PRU00047"/>
    </source>
</evidence>
<evidence type="ECO:0000256" key="10">
    <source>
        <dbReference type="SAM" id="MobiDB-lite"/>
    </source>
</evidence>
<evidence type="ECO:0000305" key="11"/>
<evidence type="ECO:0007829" key="12">
    <source>
        <dbReference type="PDB" id="2DI2"/>
    </source>
</evidence>
<evidence type="ECO:0007829" key="13">
    <source>
        <dbReference type="PDB" id="2EC7"/>
    </source>
</evidence>
<accession>P18041</accession>
<keyword id="KW-0002">3D-structure</keyword>
<keyword id="KW-0014">AIDS</keyword>
<keyword id="KW-0167">Capsid protein</keyword>
<keyword id="KW-1032">Host cell membrane</keyword>
<keyword id="KW-1035">Host cytoplasm</keyword>
<keyword id="KW-1039">Host endosome</keyword>
<keyword id="KW-1043">Host membrane</keyword>
<keyword id="KW-1048">Host nucleus</keyword>
<keyword id="KW-0945">Host-virus interaction</keyword>
<keyword id="KW-0449">Lipoprotein</keyword>
<keyword id="KW-0472">Membrane</keyword>
<keyword id="KW-0479">Metal-binding</keyword>
<keyword id="KW-0519">Myristate</keyword>
<keyword id="KW-0597">Phosphoprotein</keyword>
<keyword id="KW-0677">Repeat</keyword>
<keyword id="KW-0688">Ribosomal frameshifting</keyword>
<keyword id="KW-0694">RNA-binding</keyword>
<keyword id="KW-1198">Viral budding</keyword>
<keyword id="KW-1187">Viral budding via the host ESCRT complexes</keyword>
<keyword id="KW-0543">Viral nucleoprotein</keyword>
<keyword id="KW-1188">Viral release from host cell</keyword>
<keyword id="KW-0946">Virion</keyword>
<keyword id="KW-0862">Zinc</keyword>
<keyword id="KW-0863">Zinc-finger</keyword>